<reference key="1">
    <citation type="submission" date="2008-06" db="EMBL/GenBank/DDBJ databases">
        <title>Genome and proteome analysis of A. pleuropneumoniae serotype 7.</title>
        <authorList>
            <person name="Linke B."/>
            <person name="Buettner F."/>
            <person name="Martinez-Arias R."/>
            <person name="Goesmann A."/>
            <person name="Baltes N."/>
            <person name="Tegetmeyer H."/>
            <person name="Singh M."/>
            <person name="Gerlach G.F."/>
        </authorList>
    </citation>
    <scope>NUCLEOTIDE SEQUENCE [LARGE SCALE GENOMIC DNA]</scope>
    <source>
        <strain>AP76</strain>
    </source>
</reference>
<proteinExistence type="inferred from homology"/>
<feature type="chain" id="PRO_1000130668" description="UPF0235 protein APP7_1431">
    <location>
        <begin position="1"/>
        <end position="97"/>
    </location>
</feature>
<dbReference type="EMBL" id="CP001091">
    <property type="protein sequence ID" value="ACE62083.1"/>
    <property type="molecule type" value="Genomic_DNA"/>
</dbReference>
<dbReference type="RefSeq" id="WP_005617857.1">
    <property type="nucleotide sequence ID" value="NC_010939.1"/>
</dbReference>
<dbReference type="SMR" id="B3GYF9"/>
<dbReference type="KEGG" id="apa:APP7_1431"/>
<dbReference type="HOGENOM" id="CLU_130694_5_0_6"/>
<dbReference type="Proteomes" id="UP000001226">
    <property type="component" value="Chromosome"/>
</dbReference>
<dbReference type="GO" id="GO:0005737">
    <property type="term" value="C:cytoplasm"/>
    <property type="evidence" value="ECO:0007669"/>
    <property type="project" value="TreeGrafter"/>
</dbReference>
<dbReference type="Gene3D" id="3.30.1200.10">
    <property type="entry name" value="YggU-like"/>
    <property type="match status" value="1"/>
</dbReference>
<dbReference type="HAMAP" id="MF_00634">
    <property type="entry name" value="UPF0235"/>
    <property type="match status" value="1"/>
</dbReference>
<dbReference type="InterPro" id="IPR003746">
    <property type="entry name" value="DUF167"/>
</dbReference>
<dbReference type="InterPro" id="IPR036591">
    <property type="entry name" value="YggU-like_sf"/>
</dbReference>
<dbReference type="NCBIfam" id="TIGR00251">
    <property type="entry name" value="DUF167 family protein"/>
    <property type="match status" value="1"/>
</dbReference>
<dbReference type="NCBIfam" id="NF003466">
    <property type="entry name" value="PRK05090.1"/>
    <property type="match status" value="1"/>
</dbReference>
<dbReference type="PANTHER" id="PTHR13420">
    <property type="entry name" value="UPF0235 PROTEIN C15ORF40"/>
    <property type="match status" value="1"/>
</dbReference>
<dbReference type="PANTHER" id="PTHR13420:SF7">
    <property type="entry name" value="UPF0235 PROTEIN C15ORF40"/>
    <property type="match status" value="1"/>
</dbReference>
<dbReference type="Pfam" id="PF02594">
    <property type="entry name" value="DUF167"/>
    <property type="match status" value="1"/>
</dbReference>
<dbReference type="SMART" id="SM01152">
    <property type="entry name" value="DUF167"/>
    <property type="match status" value="1"/>
</dbReference>
<dbReference type="SUPFAM" id="SSF69786">
    <property type="entry name" value="YggU-like"/>
    <property type="match status" value="1"/>
</dbReference>
<accession>B3GYF9</accession>
<sequence>MEAVERIENPYGIRLRIFLQPKASRDQIVGLHDSELKIAITAPPVDGAANAHLLKYLSKLFKVPKSSIVLEKGELQRHKQLFVPEPKLIPKEIEALL</sequence>
<organism>
    <name type="scientific">Actinobacillus pleuropneumoniae serotype 7 (strain AP76)</name>
    <dbReference type="NCBI Taxonomy" id="537457"/>
    <lineage>
        <taxon>Bacteria</taxon>
        <taxon>Pseudomonadati</taxon>
        <taxon>Pseudomonadota</taxon>
        <taxon>Gammaproteobacteria</taxon>
        <taxon>Pasteurellales</taxon>
        <taxon>Pasteurellaceae</taxon>
        <taxon>Actinobacillus</taxon>
    </lineage>
</organism>
<name>Y1431_ACTP7</name>
<protein>
    <recommendedName>
        <fullName evidence="1">UPF0235 protein APP7_1431</fullName>
    </recommendedName>
</protein>
<comment type="similarity">
    <text evidence="1">Belongs to the UPF0235 family.</text>
</comment>
<gene>
    <name type="ordered locus">APP7_1431</name>
</gene>
<evidence type="ECO:0000255" key="1">
    <source>
        <dbReference type="HAMAP-Rule" id="MF_00634"/>
    </source>
</evidence>